<feature type="signal peptide" evidence="1">
    <location>
        <begin position="1"/>
        <end position="15"/>
    </location>
</feature>
<feature type="chain" id="PRO_0000041536" description="Vitellogenin-5">
    <location>
        <begin position="16"/>
        <end position="1603"/>
    </location>
</feature>
<feature type="domain" description="Vitellogenin" evidence="2">
    <location>
        <begin position="24"/>
        <end position="685"/>
    </location>
</feature>
<feature type="domain" description="VWFD" evidence="3">
    <location>
        <begin position="1306"/>
        <end position="1475"/>
    </location>
</feature>
<feature type="region of interest" description="Disordered" evidence="4">
    <location>
        <begin position="1492"/>
        <end position="1513"/>
    </location>
</feature>
<feature type="disulfide bond" evidence="3">
    <location>
        <begin position="1308"/>
        <end position="1438"/>
    </location>
</feature>
<feature type="disulfide bond" evidence="3">
    <location>
        <begin position="1330"/>
        <end position="1474"/>
    </location>
</feature>
<feature type="sequence conflict" description="In Ref. 1; CAA26849." evidence="6" ref="1">
    <original>A</original>
    <variation>R</variation>
    <location>
        <position position="45"/>
    </location>
</feature>
<feature type="sequence conflict" description="In Ref. 1; CAA26849." evidence="6" ref="1">
    <original>L</original>
    <variation>V</variation>
    <location>
        <position position="169"/>
    </location>
</feature>
<feature type="sequence conflict" description="In Ref. 1; CAA26849." evidence="6" ref="1">
    <original>EVAYT</original>
    <variation>RSRLH</variation>
    <location>
        <begin position="183"/>
        <end position="187"/>
    </location>
</feature>
<feature type="sequence conflict" description="In Ref. 1; CAA26849." evidence="6" ref="1">
    <original>TL</original>
    <variation>SI</variation>
    <location>
        <begin position="391"/>
        <end position="392"/>
    </location>
</feature>
<feature type="sequence conflict" description="In Ref. 1; CAA26849." evidence="6" ref="1">
    <original>N</original>
    <variation>H</variation>
    <location>
        <position position="614"/>
    </location>
</feature>
<feature type="sequence conflict" description="In Ref. 1; CAA26849." evidence="6" ref="1">
    <original>F</original>
    <variation>L</variation>
    <location>
        <position position="689"/>
    </location>
</feature>
<feature type="sequence conflict" description="In Ref. 1; CAA26849." evidence="6" ref="1">
    <original>RFW</original>
    <variation>PLL</variation>
    <location>
        <begin position="883"/>
        <end position="885"/>
    </location>
</feature>
<feature type="sequence conflict" description="In Ref. 1; CAA26849." evidence="6" ref="1">
    <original>YMNMTI</original>
    <variation>SHEHDH</variation>
    <location>
        <begin position="1264"/>
        <end position="1269"/>
    </location>
</feature>
<feature type="sequence conflict" description="In Ref. 1; CAA26849." evidence="6" ref="1">
    <original>V</original>
    <variation>A</variation>
    <location>
        <position position="1281"/>
    </location>
</feature>
<feature type="sequence conflict" description="In Ref. 1; CAA26849." evidence="6" ref="1">
    <original>D</original>
    <variation>H</variation>
    <location>
        <position position="1319"/>
    </location>
</feature>
<feature type="sequence conflict" description="In Ref. 1; CAA26849." evidence="6" ref="1">
    <original>VEN</original>
    <variation>FEF</variation>
    <location>
        <begin position="1476"/>
        <end position="1478"/>
    </location>
</feature>
<feature type="sequence conflict" description="In Ref. 1; CAA26849." evidence="6" ref="1">
    <original>K</original>
    <variation>E</variation>
    <location>
        <position position="1517"/>
    </location>
</feature>
<feature type="sequence conflict" description="In Ref. 1; CAA26849." evidence="6" ref="1">
    <original>SKNAR</original>
    <variation>RQERS</variation>
    <location>
        <begin position="1565"/>
        <end position="1569"/>
    </location>
</feature>
<feature type="sequence conflict" description="In Ref. 1; CAA26849." evidence="6" ref="1">
    <original>KEAR</original>
    <variation>QGSS</variation>
    <location>
        <begin position="1573"/>
        <end position="1576"/>
    </location>
</feature>
<protein>
    <recommendedName>
        <fullName>Vitellogenin-5</fullName>
    </recommendedName>
</protein>
<comment type="function">
    <text evidence="5 6">Precursor of the egg-yolk proteins that are sources of nutrients during embryonic development (Probable). Together with other vitellogenins, may play a role in modulating life-span, acting via induction of autophagy and lysosomal lipolysis (PubMed:26671266).</text>
</comment>
<comment type="subcellular location">
    <subcellularLocation>
        <location evidence="7">Secreted</location>
    </subcellularLocation>
</comment>
<comment type="tissue specificity">
    <text evidence="7">Expressed in the intestine of adult hermaphrodites.</text>
</comment>
<comment type="PTM">
    <text evidence="6">Vitellogenin 5 undergoes little if any processing before being packaged into yolk platelets.</text>
</comment>
<comment type="disruption phenotype">
    <text evidence="5">Simultaneous RNAi-mediated knockdown of vitellogenins vit-1, vit-2, vit-3, vit-4 and vit-5 increases life span, causes accumulation of neutral lipid and an increase in lgg-1 foci in the proximal intestine; however, does not affect fertility or pharyngeal pumping rates (PubMed:26671266). Expression of transcription factors pha-4 and daf-16 are increased (PubMed:26671266).</text>
</comment>
<comment type="caution">
    <text evidence="7">High sequence similarity with other vitellogenin genes means that assigning functions to individual proteins is difficult; authors sometimes refer to VITs or vitellogenins.</text>
</comment>
<evidence type="ECO:0000255" key="1"/>
<evidence type="ECO:0000255" key="2">
    <source>
        <dbReference type="PROSITE-ProRule" id="PRU00557"/>
    </source>
</evidence>
<evidence type="ECO:0000255" key="3">
    <source>
        <dbReference type="PROSITE-ProRule" id="PRU00580"/>
    </source>
</evidence>
<evidence type="ECO:0000256" key="4">
    <source>
        <dbReference type="SAM" id="MobiDB-lite"/>
    </source>
</evidence>
<evidence type="ECO:0000269" key="5">
    <source>
    </source>
</evidence>
<evidence type="ECO:0000305" key="6"/>
<evidence type="ECO:0000305" key="7">
    <source>
    </source>
</evidence>
<proteinExistence type="evidence at transcript level"/>
<organism>
    <name type="scientific">Caenorhabditis elegans</name>
    <dbReference type="NCBI Taxonomy" id="6239"/>
    <lineage>
        <taxon>Eukaryota</taxon>
        <taxon>Metazoa</taxon>
        <taxon>Ecdysozoa</taxon>
        <taxon>Nematoda</taxon>
        <taxon>Chromadorea</taxon>
        <taxon>Rhabditida</taxon>
        <taxon>Rhabditina</taxon>
        <taxon>Rhabditomorpha</taxon>
        <taxon>Rhabditoidea</taxon>
        <taxon>Rhabditidae</taxon>
        <taxon>Peloderinae</taxon>
        <taxon>Caenorhabditis</taxon>
    </lineage>
</organism>
<gene>
    <name type="primary">vit-5</name>
    <name type="ORF">C04F6.1</name>
</gene>
<name>VIT5_CAEEL</name>
<keyword id="KW-1015">Disulfide bond</keyword>
<keyword id="KW-1185">Reference proteome</keyword>
<keyword id="KW-0964">Secreted</keyword>
<keyword id="KW-0732">Signal</keyword>
<keyword id="KW-0758">Storage protein</keyword>
<dbReference type="EMBL" id="X03044">
    <property type="protein sequence ID" value="CAA26849.1"/>
    <property type="molecule type" value="Genomic_DNA"/>
</dbReference>
<dbReference type="EMBL" id="FO080344">
    <property type="protein sequence ID" value="CCD63027.1"/>
    <property type="molecule type" value="Genomic_DNA"/>
</dbReference>
<dbReference type="EMBL" id="X02755">
    <property type="protein sequence ID" value="CAA26532.1"/>
    <property type="molecule type" value="Genomic_DNA"/>
</dbReference>
<dbReference type="PIR" id="A03334">
    <property type="entry name" value="VJKW5"/>
</dbReference>
<dbReference type="PIR" id="F89497">
    <property type="entry name" value="F89497"/>
</dbReference>
<dbReference type="RefSeq" id="NP_508589.1">
    <property type="nucleotide sequence ID" value="NM_076188.7"/>
</dbReference>
<dbReference type="SMR" id="P06125"/>
<dbReference type="BioGRID" id="45570">
    <property type="interactions" value="27"/>
</dbReference>
<dbReference type="DIP" id="DIP-25459N"/>
<dbReference type="FunCoup" id="P06125">
    <property type="interactions" value="386"/>
</dbReference>
<dbReference type="IntAct" id="P06125">
    <property type="interactions" value="1"/>
</dbReference>
<dbReference type="STRING" id="6239.C04F6.1.1"/>
<dbReference type="iPTMnet" id="P06125"/>
<dbReference type="PaxDb" id="6239-C04F6.1"/>
<dbReference type="PeptideAtlas" id="P06125"/>
<dbReference type="EnsemblMetazoa" id="C04F6.1.1">
    <property type="protein sequence ID" value="C04F6.1.1"/>
    <property type="gene ID" value="WBGene00006929"/>
</dbReference>
<dbReference type="GeneID" id="180630"/>
<dbReference type="KEGG" id="cel:CELE_C04F6.1"/>
<dbReference type="UCSC" id="C04F6.1.1">
    <property type="organism name" value="c. elegans"/>
</dbReference>
<dbReference type="AGR" id="WB:WBGene00006929"/>
<dbReference type="CTD" id="180630"/>
<dbReference type="WormBase" id="C04F6.1">
    <property type="protein sequence ID" value="CE03921"/>
    <property type="gene ID" value="WBGene00006929"/>
    <property type="gene designation" value="vit-5"/>
</dbReference>
<dbReference type="eggNOG" id="KOG4338">
    <property type="taxonomic scope" value="Eukaryota"/>
</dbReference>
<dbReference type="GeneTree" id="ENSGT00530000064273"/>
<dbReference type="HOGENOM" id="CLU_003821_0_0_1"/>
<dbReference type="InParanoid" id="P06125"/>
<dbReference type="OMA" id="ENPMWHP"/>
<dbReference type="OrthoDB" id="5825149at2759"/>
<dbReference type="PhylomeDB" id="P06125"/>
<dbReference type="SignaLink" id="P06125"/>
<dbReference type="PRO" id="PR:P06125"/>
<dbReference type="Proteomes" id="UP000001940">
    <property type="component" value="Chromosome X"/>
</dbReference>
<dbReference type="Bgee" id="WBGene00006929">
    <property type="expression patterns" value="Expressed in adult organism and 1 other cell type or tissue"/>
</dbReference>
<dbReference type="GO" id="GO:0005576">
    <property type="term" value="C:extracellular region"/>
    <property type="evidence" value="ECO:0007669"/>
    <property type="project" value="UniProtKB-SubCell"/>
</dbReference>
<dbReference type="GO" id="GO:0005319">
    <property type="term" value="F:lipid transporter activity"/>
    <property type="evidence" value="ECO:0000318"/>
    <property type="project" value="GO_Central"/>
</dbReference>
<dbReference type="GO" id="GO:0045735">
    <property type="term" value="F:nutrient reservoir activity"/>
    <property type="evidence" value="ECO:0007669"/>
    <property type="project" value="UniProtKB-KW"/>
</dbReference>
<dbReference type="FunFam" id="1.25.10.20:FF:000003">
    <property type="entry name" value="Vitellogenin C"/>
    <property type="match status" value="1"/>
</dbReference>
<dbReference type="FunFam" id="2.30.230.10:FF:000004">
    <property type="entry name" value="Vitellogenin-1"/>
    <property type="match status" value="1"/>
</dbReference>
<dbReference type="FunFam" id="2.20.80.10:FF:000004">
    <property type="entry name" value="Vitellogenin-3"/>
    <property type="match status" value="1"/>
</dbReference>
<dbReference type="Gene3D" id="2.30.230.10">
    <property type="entry name" value="Lipovitellin, beta-sheet shell regions, chain A"/>
    <property type="match status" value="1"/>
</dbReference>
<dbReference type="Gene3D" id="2.20.80.10">
    <property type="entry name" value="Lipovitellin-phosvitin complex, chain A, domain 4"/>
    <property type="match status" value="1"/>
</dbReference>
<dbReference type="Gene3D" id="1.25.10.20">
    <property type="entry name" value="Vitellinogen, superhelical"/>
    <property type="match status" value="1"/>
</dbReference>
<dbReference type="InterPro" id="IPR015819">
    <property type="entry name" value="Lipid_transp_b-sht_shell"/>
</dbReference>
<dbReference type="InterPro" id="IPR011030">
    <property type="entry name" value="Lipovitellin_superhlx_dom"/>
</dbReference>
<dbReference type="InterPro" id="IPR015816">
    <property type="entry name" value="Vitellinogen_b-sht_N"/>
</dbReference>
<dbReference type="InterPro" id="IPR015255">
    <property type="entry name" value="Vitellinogen_open_b-sht"/>
</dbReference>
<dbReference type="InterPro" id="IPR050733">
    <property type="entry name" value="Vitellogenin/Apolipophorin"/>
</dbReference>
<dbReference type="InterPro" id="IPR001747">
    <property type="entry name" value="Vitellogenin_N"/>
</dbReference>
<dbReference type="InterPro" id="IPR001846">
    <property type="entry name" value="VWF_type-D"/>
</dbReference>
<dbReference type="PANTHER" id="PTHR23345:SF8">
    <property type="entry name" value="VITELLOGENIN-3-RELATED"/>
    <property type="match status" value="1"/>
</dbReference>
<dbReference type="PANTHER" id="PTHR23345">
    <property type="entry name" value="VITELLOGENIN-RELATED"/>
    <property type="match status" value="1"/>
</dbReference>
<dbReference type="Pfam" id="PF09172">
    <property type="entry name" value="Vit_open_b-sht"/>
    <property type="match status" value="1"/>
</dbReference>
<dbReference type="Pfam" id="PF01347">
    <property type="entry name" value="Vitellogenin_N"/>
    <property type="match status" value="1"/>
</dbReference>
<dbReference type="Pfam" id="PF00094">
    <property type="entry name" value="VWD"/>
    <property type="match status" value="1"/>
</dbReference>
<dbReference type="SMART" id="SM01169">
    <property type="entry name" value="DUF1943"/>
    <property type="match status" value="1"/>
</dbReference>
<dbReference type="SMART" id="SM00638">
    <property type="entry name" value="LPD_N"/>
    <property type="match status" value="1"/>
</dbReference>
<dbReference type="SMART" id="SM00216">
    <property type="entry name" value="VWD"/>
    <property type="match status" value="1"/>
</dbReference>
<dbReference type="SUPFAM" id="SSF56968">
    <property type="entry name" value="Lipovitellin-phosvitin complex, beta-sheet shell regions"/>
    <property type="match status" value="2"/>
</dbReference>
<dbReference type="SUPFAM" id="SSF48431">
    <property type="entry name" value="Lipovitellin-phosvitin complex, superhelical domain"/>
    <property type="match status" value="1"/>
</dbReference>
<dbReference type="PROSITE" id="PS51211">
    <property type="entry name" value="VITELLOGENIN"/>
    <property type="match status" value="1"/>
</dbReference>
<dbReference type="PROSITE" id="PS51233">
    <property type="entry name" value="VWFD"/>
    <property type="match status" value="1"/>
</dbReference>
<accession>P06125</accession>
<reference key="1">
    <citation type="journal article" date="1985" name="Nucleic Acids Res.">
        <title>The nucleotide sequence of a nematode vitellogenin gene.</title>
        <authorList>
            <person name="Spieth J."/>
            <person name="Denison K."/>
            <person name="Zucker E."/>
            <person name="Blumenthal T."/>
        </authorList>
    </citation>
    <scope>NUCLEOTIDE SEQUENCE [GENOMIC DNA]</scope>
</reference>
<reference key="2">
    <citation type="journal article" date="1998" name="Science">
        <title>Genome sequence of the nematode C. elegans: a platform for investigating biology.</title>
        <authorList>
            <consortium name="The C. elegans sequencing consortium"/>
        </authorList>
    </citation>
    <scope>NUCLEOTIDE SEQUENCE [LARGE SCALE GENOMIC DNA]</scope>
    <source>
        <strain>Bristol N2</strain>
    </source>
</reference>
<reference key="3">
    <citation type="journal article" date="1985" name="Nucleic Acids Res.">
        <title>The C. elegans vitellogenin genes: short sequence repeats in the promoter regions and homology to the vertebrate genes.</title>
        <authorList>
            <person name="Spieth J."/>
            <person name="Denison K."/>
            <person name="Kirtland S."/>
            <person name="Cane J."/>
            <person name="Blumenthal T."/>
        </authorList>
    </citation>
    <scope>NUCLEOTIDE SEQUENCE [GENOMIC DNA] OF 1-24</scope>
</reference>
<reference key="4">
    <citation type="journal article" date="2016" name="Autophagy">
        <title>Autophagy-mediated longevity is modulated by lipoprotein biogenesis.</title>
        <authorList>
            <person name="Seah N.E."/>
            <person name="de Magalhaes Filho C.D."/>
            <person name="Petrashen A.P."/>
            <person name="Henderson H.R."/>
            <person name="Laguer J."/>
            <person name="Gonzalez J."/>
            <person name="Dillin A."/>
            <person name="Hansen M."/>
            <person name="Lapierre L.R."/>
        </authorList>
    </citation>
    <scope>FUNCTION</scope>
    <scope>SUBCELLULAR LOCATION</scope>
    <scope>TISSUE SPECIFICITY</scope>
    <scope>DISRUPTION PHENOTYPE</scope>
</reference>
<sequence length="1603" mass="186439">MKSIIIASLVALAIAASPALDRTFSPKSEYVYKFDGLLLSGLPTASSDASQTLISCRTRLQAVDDRYIHLQLTDIQYSASHIPQSEQWPKIESLEQRELSDEFKELLELPFRAQIRNGLISEIQFSSEDAEWSKNAKRSILNLFSLRKSAPVDEMNQDQKDMESDKDSLFFNVHEKTMEGDCEVAYTIVQEGEKTIYTKSVNFDKCITRPETAYGLRFGSECKECEKEGQFVKPQTVYTYTFKNEKLQESEVHSVYTLNVNGQEVVKSETRAKVTFVEESKINREIKKVSGPKEEIVYSMENEKLIEQFYQQGDKAEVNPFKAIEMEQKVEQLQEIFRQIQEHEQNTPETVHLIARAVRMFRMCTIEELKKVHTTIYTKAEKKVQLVIETTLAVAGTKNTIQHLIHHFEKKSITPLRAAELLKSVQETLYPSEHIADLLIQLAQSPLSEKYEPLRQSAWLAAGSVVRGFASKTQDLPLIRPASRQTKEKYVRVFMQHFRNADSTYEKVLALKTLGNAGIDLSVYELVQIIQDPRQPLSIRTEAVDALRLLKDVMPRKIQKVLLPVYKNRQNKPELRMAALWRMMHTIPEEPVLAHIVSQMENESNQHVAAFTYNVLRQFYKSTNPCYQQLAVRCSKILLFTRYQPQEQMLSTYSQLPLFNSEWLSGVQFDFATIFEKNAFLPKEVQASFETVFGGNWNKYFAQVGFSQQNFEQVILKTLEKLSLYGKQSDELRSRRVQSGIQMLQEIVKKMNIRPRVQQTDSQNAHAVFYLRYKEMDYIVLPIDMETIDTLVEKYVRNGEFDIKSLLTFLTNDSKFELHRALFFYEAERRIPTTIGMPLTISGKMPTILSINGKVSIELEKLGARLVLDIVPTVATTHVTEMRFWYPVIEQGVKSLQSARLHTPLRFESTVELKKNTLEITHKFVVPENKKTTVSVHTRPVAFIRVPKNQDSEYVEAEEKTISHSQYQMSTEEIDRQYETFGLRINAQGNVLSQWTLPMVLMTEQDFEYTLENKNRPVEFTARVTIGNLEKTDLSEIKFDKIFEKEFDLENNESENRRQYFHKMIREIQSEQGFKNLITLKLEAPQQMYWNTELRTVCDKWIRMCKVEMDARRSPMEHENKEWTLRTELLAARPQMPSSLRQLREQPHREVQLAFNAKWGSSKKSEITVNAQLEQSTEQKKFIRNIEREYKGIPEYELLIKAARLNQVNVVSEYKLTPQSEYTFSRIFDLIKAYNFWTVSEKRVQNENRRVVLQLSVEPLSRQYMNMTIQTPEQEVELKNVRIPRVVLPTIARSAMFQQTWEKTGATCKVDQSEVSTFDNVIYRAPLTTCYSLVAKDCSEQPRFAVLAKKINKNSEELLVKVVRREEEIVVKKSDDKFLVKVDGKKVNPTELEQYNIEILGDNLIVIRLPQGEVRFDGYTVKTNMPSVASQNQLCGLCGNNDGERDNEFMTADNYETEDVEEFHRSYLLKNEECEVENDRISEKKNYRNKWNREEKKSDYESSSDYESNYDEKETEKELVKKTLIKEFSNRVCFSIEPVSECRRGLESEKTSNKKIRFTCMPRHSKNARRFLKEAREQTVAELVDFPVSFVESVKIPTACVAY</sequence>